<name>DBP9_YARLI</name>
<evidence type="ECO:0000250" key="1"/>
<evidence type="ECO:0000255" key="2">
    <source>
        <dbReference type="PROSITE-ProRule" id="PRU00541"/>
    </source>
</evidence>
<evidence type="ECO:0000255" key="3">
    <source>
        <dbReference type="PROSITE-ProRule" id="PRU00542"/>
    </source>
</evidence>
<evidence type="ECO:0000256" key="4">
    <source>
        <dbReference type="SAM" id="MobiDB-lite"/>
    </source>
</evidence>
<evidence type="ECO:0000305" key="5"/>
<gene>
    <name type="primary">DBP9</name>
    <name type="ordered locus">YALI0F31493g</name>
</gene>
<feature type="chain" id="PRO_0000232347" description="ATP-dependent RNA helicase DBP9">
    <location>
        <begin position="1"/>
        <end position="544"/>
    </location>
</feature>
<feature type="domain" description="Helicase ATP-binding" evidence="2">
    <location>
        <begin position="41"/>
        <end position="214"/>
    </location>
</feature>
<feature type="domain" description="Helicase C-terminal" evidence="3">
    <location>
        <begin position="225"/>
        <end position="430"/>
    </location>
</feature>
<feature type="region of interest" description="Disordered" evidence="4">
    <location>
        <begin position="525"/>
        <end position="544"/>
    </location>
</feature>
<feature type="short sequence motif" description="Q motif">
    <location>
        <begin position="9"/>
        <end position="37"/>
    </location>
</feature>
<feature type="short sequence motif" description="DEAD box">
    <location>
        <begin position="162"/>
        <end position="165"/>
    </location>
</feature>
<feature type="compositionally biased region" description="Basic and acidic residues" evidence="4">
    <location>
        <begin position="534"/>
        <end position="544"/>
    </location>
</feature>
<feature type="binding site" evidence="2">
    <location>
        <begin position="54"/>
        <end position="61"/>
    </location>
    <ligand>
        <name>ATP</name>
        <dbReference type="ChEBI" id="CHEBI:30616"/>
    </ligand>
</feature>
<proteinExistence type="inferred from homology"/>
<keyword id="KW-0067">ATP-binding</keyword>
<keyword id="KW-0347">Helicase</keyword>
<keyword id="KW-0378">Hydrolase</keyword>
<keyword id="KW-0547">Nucleotide-binding</keyword>
<keyword id="KW-0539">Nucleus</keyword>
<keyword id="KW-1185">Reference proteome</keyword>
<keyword id="KW-0690">Ribosome biogenesis</keyword>
<keyword id="KW-0694">RNA-binding</keyword>
<keyword id="KW-0698">rRNA processing</keyword>
<comment type="function">
    <text evidence="1">ATP-binding RNA helicase involved in the biogenesis of 60S ribosomal subunits and is required for the normal formation of 25S and 5.8S rRNAs.</text>
</comment>
<comment type="catalytic activity">
    <reaction>
        <text>ATP + H2O = ADP + phosphate + H(+)</text>
        <dbReference type="Rhea" id="RHEA:13065"/>
        <dbReference type="ChEBI" id="CHEBI:15377"/>
        <dbReference type="ChEBI" id="CHEBI:15378"/>
        <dbReference type="ChEBI" id="CHEBI:30616"/>
        <dbReference type="ChEBI" id="CHEBI:43474"/>
        <dbReference type="ChEBI" id="CHEBI:456216"/>
        <dbReference type="EC" id="3.6.4.13"/>
    </reaction>
</comment>
<comment type="subcellular location">
    <subcellularLocation>
        <location evidence="1">Nucleus</location>
        <location evidence="1">Nucleolus</location>
    </subcellularLocation>
</comment>
<comment type="domain">
    <text>The Q motif is unique to and characteristic of the DEAD box family of RNA helicases and controls ATP binding and hydrolysis.</text>
</comment>
<comment type="similarity">
    <text evidence="5">Belongs to the DEAD box helicase family. DDX56/DBP9 subfamily.</text>
</comment>
<organism>
    <name type="scientific">Yarrowia lipolytica (strain CLIB 122 / E 150)</name>
    <name type="common">Yeast</name>
    <name type="synonym">Candida lipolytica</name>
    <dbReference type="NCBI Taxonomy" id="284591"/>
    <lineage>
        <taxon>Eukaryota</taxon>
        <taxon>Fungi</taxon>
        <taxon>Dikarya</taxon>
        <taxon>Ascomycota</taxon>
        <taxon>Saccharomycotina</taxon>
        <taxon>Dipodascomycetes</taxon>
        <taxon>Dipodascales</taxon>
        <taxon>Dipodascales incertae sedis</taxon>
        <taxon>Yarrowia</taxon>
    </lineage>
</organism>
<protein>
    <recommendedName>
        <fullName>ATP-dependent RNA helicase DBP9</fullName>
        <ecNumber>3.6.4.13</ecNumber>
    </recommendedName>
</protein>
<accession>Q6BZR4</accession>
<reference key="1">
    <citation type="journal article" date="2004" name="Nature">
        <title>Genome evolution in yeasts.</title>
        <authorList>
            <person name="Dujon B."/>
            <person name="Sherman D."/>
            <person name="Fischer G."/>
            <person name="Durrens P."/>
            <person name="Casaregola S."/>
            <person name="Lafontaine I."/>
            <person name="de Montigny J."/>
            <person name="Marck C."/>
            <person name="Neuveglise C."/>
            <person name="Talla E."/>
            <person name="Goffard N."/>
            <person name="Frangeul L."/>
            <person name="Aigle M."/>
            <person name="Anthouard V."/>
            <person name="Babour A."/>
            <person name="Barbe V."/>
            <person name="Barnay S."/>
            <person name="Blanchin S."/>
            <person name="Beckerich J.-M."/>
            <person name="Beyne E."/>
            <person name="Bleykasten C."/>
            <person name="Boisrame A."/>
            <person name="Boyer J."/>
            <person name="Cattolico L."/>
            <person name="Confanioleri F."/>
            <person name="de Daruvar A."/>
            <person name="Despons L."/>
            <person name="Fabre E."/>
            <person name="Fairhead C."/>
            <person name="Ferry-Dumazet H."/>
            <person name="Groppi A."/>
            <person name="Hantraye F."/>
            <person name="Hennequin C."/>
            <person name="Jauniaux N."/>
            <person name="Joyet P."/>
            <person name="Kachouri R."/>
            <person name="Kerrest A."/>
            <person name="Koszul R."/>
            <person name="Lemaire M."/>
            <person name="Lesur I."/>
            <person name="Ma L."/>
            <person name="Muller H."/>
            <person name="Nicaud J.-M."/>
            <person name="Nikolski M."/>
            <person name="Oztas S."/>
            <person name="Ozier-Kalogeropoulos O."/>
            <person name="Pellenz S."/>
            <person name="Potier S."/>
            <person name="Richard G.-F."/>
            <person name="Straub M.-L."/>
            <person name="Suleau A."/>
            <person name="Swennen D."/>
            <person name="Tekaia F."/>
            <person name="Wesolowski-Louvel M."/>
            <person name="Westhof E."/>
            <person name="Wirth B."/>
            <person name="Zeniou-Meyer M."/>
            <person name="Zivanovic Y."/>
            <person name="Bolotin-Fukuhara M."/>
            <person name="Thierry A."/>
            <person name="Bouchier C."/>
            <person name="Caudron B."/>
            <person name="Scarpelli C."/>
            <person name="Gaillardin C."/>
            <person name="Weissenbach J."/>
            <person name="Wincker P."/>
            <person name="Souciet J.-L."/>
        </authorList>
    </citation>
    <scope>NUCLEOTIDE SEQUENCE [LARGE SCALE GENOMIC DNA]</scope>
    <source>
        <strain>CLIB 122 / E 150</strain>
    </source>
</reference>
<sequence length="544" mass="61880">MTTPDLEDKSFDSFGLDDRLLSGLAACDMKQPTLIQNTTIPLALDKGVDITAKAVTGSGKTVAYLLPIFELMLRAEKEKRDIQTALIVVPTRELCEQVSKVITKLTQFCPHLKSLNVTQQLGDDVISSLLEEKPSIIVGTPSRLLKYAKEMDCSKVGYLVIDEADLLLSYGYKEDLIELSEMLPKTKHTFIMSATLNKESDLMKQQFCRSTVASVAVTAAEEERKLLQYYVKCSERDKFLLAYVMFKLQLVKGKTIVFVNEIDRCYRLRLFLEQFGIKACVLNSELPIASRLHIVEQFNKGVFNLLICTDEANKLAEASKSASKQTKEVSRAHEYSSTRGLDFMNVAFVLNFDLPLSSRAYVHRVGRTARANKAGTALSFVVPADQWGKDKVAKLDTAKRDEKVLKKIIKNQESQNMEIKPYSFDMKQVEGFRYRMDDAFRAVTTVGVREARVKEIKTELLNSERLARHFDENPDDLKALRHDKELHTSKVQAHMKRVPDYLLGRKGKLDPNVFVPFRKDDNKIHKKYTKKKKGGDPLKFKKRK</sequence>
<dbReference type="EC" id="3.6.4.13"/>
<dbReference type="EMBL" id="CR382132">
    <property type="protein sequence ID" value="CAG78911.1"/>
    <property type="molecule type" value="Genomic_DNA"/>
</dbReference>
<dbReference type="RefSeq" id="XP_506098.1">
    <property type="nucleotide sequence ID" value="XM_506098.1"/>
</dbReference>
<dbReference type="SMR" id="Q6BZR4"/>
<dbReference type="FunCoup" id="Q6BZR4">
    <property type="interactions" value="1018"/>
</dbReference>
<dbReference type="STRING" id="284591.Q6BZR4"/>
<dbReference type="EnsemblFungi" id="CAG78911">
    <property type="protein sequence ID" value="CAG78911"/>
    <property type="gene ID" value="YALI0_F31493g"/>
</dbReference>
<dbReference type="KEGG" id="yli:2907892"/>
<dbReference type="VEuPathDB" id="FungiDB:YALI0_F31493g"/>
<dbReference type="HOGENOM" id="CLU_003041_17_1_1"/>
<dbReference type="InParanoid" id="Q6BZR4"/>
<dbReference type="OMA" id="NASEQCV"/>
<dbReference type="OrthoDB" id="117318at4891"/>
<dbReference type="Proteomes" id="UP000001300">
    <property type="component" value="Chromosome F"/>
</dbReference>
<dbReference type="GO" id="GO:0005730">
    <property type="term" value="C:nucleolus"/>
    <property type="evidence" value="ECO:0000318"/>
    <property type="project" value="GO_Central"/>
</dbReference>
<dbReference type="GO" id="GO:0005524">
    <property type="term" value="F:ATP binding"/>
    <property type="evidence" value="ECO:0007669"/>
    <property type="project" value="UniProtKB-KW"/>
</dbReference>
<dbReference type="GO" id="GO:0016887">
    <property type="term" value="F:ATP hydrolysis activity"/>
    <property type="evidence" value="ECO:0007669"/>
    <property type="project" value="RHEA"/>
</dbReference>
<dbReference type="GO" id="GO:0003678">
    <property type="term" value="F:DNA helicase activity"/>
    <property type="evidence" value="ECO:0007669"/>
    <property type="project" value="EnsemblFungi"/>
</dbReference>
<dbReference type="GO" id="GO:0033677">
    <property type="term" value="F:DNA/RNA helicase activity"/>
    <property type="evidence" value="ECO:0007669"/>
    <property type="project" value="EnsemblFungi"/>
</dbReference>
<dbReference type="GO" id="GO:0003723">
    <property type="term" value="F:RNA binding"/>
    <property type="evidence" value="ECO:0007669"/>
    <property type="project" value="UniProtKB-KW"/>
</dbReference>
<dbReference type="GO" id="GO:0003724">
    <property type="term" value="F:RNA helicase activity"/>
    <property type="evidence" value="ECO:0007669"/>
    <property type="project" value="UniProtKB-EC"/>
</dbReference>
<dbReference type="GO" id="GO:0000463">
    <property type="term" value="P:maturation of LSU-rRNA from tricistronic rRNA transcript (SSU-rRNA, 5.8S rRNA, LSU-rRNA)"/>
    <property type="evidence" value="ECO:0007669"/>
    <property type="project" value="EnsemblFungi"/>
</dbReference>
<dbReference type="CDD" id="cd17961">
    <property type="entry name" value="DEADc_DDX56"/>
    <property type="match status" value="1"/>
</dbReference>
<dbReference type="CDD" id="cd18787">
    <property type="entry name" value="SF2_C_DEAD"/>
    <property type="match status" value="1"/>
</dbReference>
<dbReference type="FunFam" id="3.40.50.300:FF:001046">
    <property type="entry name" value="Probable ATP-dependent RNA helicase ddx56"/>
    <property type="match status" value="1"/>
</dbReference>
<dbReference type="Gene3D" id="3.40.50.300">
    <property type="entry name" value="P-loop containing nucleotide triphosphate hydrolases"/>
    <property type="match status" value="2"/>
</dbReference>
<dbReference type="InterPro" id="IPR011545">
    <property type="entry name" value="DEAD/DEAH_box_helicase_dom"/>
</dbReference>
<dbReference type="InterPro" id="IPR050079">
    <property type="entry name" value="DEAD_box_RNA_helicase"/>
</dbReference>
<dbReference type="InterPro" id="IPR014001">
    <property type="entry name" value="Helicase_ATP-bd"/>
</dbReference>
<dbReference type="InterPro" id="IPR001650">
    <property type="entry name" value="Helicase_C-like"/>
</dbReference>
<dbReference type="InterPro" id="IPR027417">
    <property type="entry name" value="P-loop_NTPase"/>
</dbReference>
<dbReference type="InterPro" id="IPR014014">
    <property type="entry name" value="RNA_helicase_DEAD_Q_motif"/>
</dbReference>
<dbReference type="PANTHER" id="PTHR47959">
    <property type="entry name" value="ATP-DEPENDENT RNA HELICASE RHLE-RELATED"/>
    <property type="match status" value="1"/>
</dbReference>
<dbReference type="PANTHER" id="PTHR47959:SF21">
    <property type="entry name" value="DEAD-BOX HELICASE 56"/>
    <property type="match status" value="1"/>
</dbReference>
<dbReference type="Pfam" id="PF00270">
    <property type="entry name" value="DEAD"/>
    <property type="match status" value="1"/>
</dbReference>
<dbReference type="Pfam" id="PF00271">
    <property type="entry name" value="Helicase_C"/>
    <property type="match status" value="1"/>
</dbReference>
<dbReference type="SMART" id="SM00487">
    <property type="entry name" value="DEXDc"/>
    <property type="match status" value="1"/>
</dbReference>
<dbReference type="SMART" id="SM00490">
    <property type="entry name" value="HELICc"/>
    <property type="match status" value="1"/>
</dbReference>
<dbReference type="SUPFAM" id="SSF52540">
    <property type="entry name" value="P-loop containing nucleoside triphosphate hydrolases"/>
    <property type="match status" value="1"/>
</dbReference>
<dbReference type="PROSITE" id="PS51192">
    <property type="entry name" value="HELICASE_ATP_BIND_1"/>
    <property type="match status" value="1"/>
</dbReference>
<dbReference type="PROSITE" id="PS51194">
    <property type="entry name" value="HELICASE_CTER"/>
    <property type="match status" value="1"/>
</dbReference>
<dbReference type="PROSITE" id="PS51195">
    <property type="entry name" value="Q_MOTIF"/>
    <property type="match status" value="1"/>
</dbReference>